<organism>
    <name type="scientific">Methanocaldococcus jannaschii (strain ATCC 43067 / DSM 2661 / JAL-1 / JCM 10045 / NBRC 100440)</name>
    <name type="common">Methanococcus jannaschii</name>
    <dbReference type="NCBI Taxonomy" id="243232"/>
    <lineage>
        <taxon>Archaea</taxon>
        <taxon>Methanobacteriati</taxon>
        <taxon>Methanobacteriota</taxon>
        <taxon>Methanomada group</taxon>
        <taxon>Methanococci</taxon>
        <taxon>Methanococcales</taxon>
        <taxon>Methanocaldococcaceae</taxon>
        <taxon>Methanocaldococcus</taxon>
    </lineage>
</organism>
<name>Y645_METJA</name>
<reference key="1">
    <citation type="journal article" date="1996" name="Science">
        <title>Complete genome sequence of the methanogenic archaeon, Methanococcus jannaschii.</title>
        <authorList>
            <person name="Bult C.J."/>
            <person name="White O."/>
            <person name="Olsen G.J."/>
            <person name="Zhou L."/>
            <person name="Fleischmann R.D."/>
            <person name="Sutton G.G."/>
            <person name="Blake J.A."/>
            <person name="FitzGerald L.M."/>
            <person name="Clayton R.A."/>
            <person name="Gocayne J.D."/>
            <person name="Kerlavage A.R."/>
            <person name="Dougherty B.A."/>
            <person name="Tomb J.-F."/>
            <person name="Adams M.D."/>
            <person name="Reich C.I."/>
            <person name="Overbeek R."/>
            <person name="Kirkness E.F."/>
            <person name="Weinstock K.G."/>
            <person name="Merrick J.M."/>
            <person name="Glodek A."/>
            <person name="Scott J.L."/>
            <person name="Geoghagen N.S.M."/>
            <person name="Weidman J.F."/>
            <person name="Fuhrmann J.L."/>
            <person name="Nguyen D."/>
            <person name="Utterback T.R."/>
            <person name="Kelley J.M."/>
            <person name="Peterson J.D."/>
            <person name="Sadow P.W."/>
            <person name="Hanna M.C."/>
            <person name="Cotton M.D."/>
            <person name="Roberts K.M."/>
            <person name="Hurst M.A."/>
            <person name="Kaine B.P."/>
            <person name="Borodovsky M."/>
            <person name="Klenk H.-P."/>
            <person name="Fraser C.M."/>
            <person name="Smith H.O."/>
            <person name="Woese C.R."/>
            <person name="Venter J.C."/>
        </authorList>
    </citation>
    <scope>NUCLEOTIDE SEQUENCE [LARGE SCALE GENOMIC DNA]</scope>
    <source>
        <strain>ATCC 43067 / DSM 2661 / JAL-1 / JCM 10045 / NBRC 100440</strain>
    </source>
</reference>
<sequence>MLRIPRSLKSIINTINGESGTRYIVRGLIDGSLSALGVVIGASGSADASVIIAAGLGGGIANGLSNILGAFTAEKASLERERIQKEKSLLKKNGYLKKSIIYKKAIRETMICGLIDGISTTIGSALPVVPFFLFDIKTALYVAIGITIAILFILGVFIGKISKENVIISGIKMVAGALAVAILCFMIEKAF</sequence>
<feature type="chain" id="PRO_0000106970" description="Uncharacterized protein MJ0645">
    <location>
        <begin position="1"/>
        <end position="191"/>
    </location>
</feature>
<feature type="transmembrane region" description="Helical" evidence="1">
    <location>
        <begin position="24"/>
        <end position="44"/>
    </location>
</feature>
<feature type="transmembrane region" description="Helical" evidence="1">
    <location>
        <begin position="51"/>
        <end position="71"/>
    </location>
</feature>
<feature type="transmembrane region" description="Helical" evidence="1">
    <location>
        <begin position="114"/>
        <end position="134"/>
    </location>
</feature>
<feature type="transmembrane region" description="Helical" evidence="1">
    <location>
        <begin position="139"/>
        <end position="159"/>
    </location>
</feature>
<feature type="transmembrane region" description="Helical" evidence="1">
    <location>
        <begin position="167"/>
        <end position="187"/>
    </location>
</feature>
<proteinExistence type="predicted"/>
<gene>
    <name type="ordered locus">MJ0645</name>
</gene>
<evidence type="ECO:0000255" key="1"/>
<evidence type="ECO:0000305" key="2"/>
<comment type="subcellular location">
    <subcellularLocation>
        <location evidence="2">Cell membrane</location>
        <topology evidence="2">Multi-pass membrane protein</topology>
    </subcellularLocation>
</comment>
<accession>Q58061</accession>
<dbReference type="EMBL" id="L77117">
    <property type="protein sequence ID" value="AAB98639.1"/>
    <property type="molecule type" value="Genomic_DNA"/>
</dbReference>
<dbReference type="PIR" id="E64380">
    <property type="entry name" value="E64380"/>
</dbReference>
<dbReference type="RefSeq" id="WP_010870150.1">
    <property type="nucleotide sequence ID" value="NC_000909.1"/>
</dbReference>
<dbReference type="SMR" id="Q58061"/>
<dbReference type="STRING" id="243232.MJ_0645"/>
<dbReference type="PaxDb" id="243232-MJ_0645"/>
<dbReference type="EnsemblBacteria" id="AAB98639">
    <property type="protein sequence ID" value="AAB98639"/>
    <property type="gene ID" value="MJ_0645"/>
</dbReference>
<dbReference type="GeneID" id="1451511"/>
<dbReference type="KEGG" id="mja:MJ_0645"/>
<dbReference type="eggNOG" id="arCOG01091">
    <property type="taxonomic scope" value="Archaea"/>
</dbReference>
<dbReference type="HOGENOM" id="CLU_111441_1_0_2"/>
<dbReference type="InParanoid" id="Q58061"/>
<dbReference type="OrthoDB" id="60696at2157"/>
<dbReference type="PhylomeDB" id="Q58061"/>
<dbReference type="Proteomes" id="UP000000805">
    <property type="component" value="Chromosome"/>
</dbReference>
<dbReference type="GO" id="GO:0016020">
    <property type="term" value="C:membrane"/>
    <property type="evidence" value="ECO:0000318"/>
    <property type="project" value="GO_Central"/>
</dbReference>
<dbReference type="GO" id="GO:0005886">
    <property type="term" value="C:plasma membrane"/>
    <property type="evidence" value="ECO:0007669"/>
    <property type="project" value="UniProtKB-SubCell"/>
</dbReference>
<dbReference type="GO" id="GO:0005381">
    <property type="term" value="F:iron ion transmembrane transporter activity"/>
    <property type="evidence" value="ECO:0000318"/>
    <property type="project" value="GO_Central"/>
</dbReference>
<dbReference type="GO" id="GO:0005384">
    <property type="term" value="F:manganese ion transmembrane transporter activity"/>
    <property type="evidence" value="ECO:0000318"/>
    <property type="project" value="GO_Central"/>
</dbReference>
<dbReference type="GO" id="GO:0030026">
    <property type="term" value="P:intracellular manganese ion homeostasis"/>
    <property type="evidence" value="ECO:0000318"/>
    <property type="project" value="GO_Central"/>
</dbReference>
<dbReference type="CDD" id="cd02437">
    <property type="entry name" value="CCC1_like_1"/>
    <property type="match status" value="1"/>
</dbReference>
<dbReference type="InterPro" id="IPR008217">
    <property type="entry name" value="Ccc1_fam"/>
</dbReference>
<dbReference type="InterPro" id="IPR006682">
    <property type="entry name" value="CHP00267"/>
</dbReference>
<dbReference type="NCBIfam" id="TIGR00267">
    <property type="entry name" value="TIGR00267 family protein"/>
    <property type="match status" value="1"/>
</dbReference>
<dbReference type="PANTHER" id="PTHR31851">
    <property type="entry name" value="FE(2+)/MN(2+) TRANSPORTER PCL1"/>
    <property type="match status" value="1"/>
</dbReference>
<dbReference type="Pfam" id="PF01988">
    <property type="entry name" value="VIT1"/>
    <property type="match status" value="2"/>
</dbReference>
<protein>
    <recommendedName>
        <fullName>Uncharacterized protein MJ0645</fullName>
    </recommendedName>
</protein>
<keyword id="KW-1003">Cell membrane</keyword>
<keyword id="KW-0472">Membrane</keyword>
<keyword id="KW-1185">Reference proteome</keyword>
<keyword id="KW-0812">Transmembrane</keyword>
<keyword id="KW-1133">Transmembrane helix</keyword>